<keyword id="KW-0046">Antibiotic resistance</keyword>
<keyword id="KW-0378">Hydrolase</keyword>
<keyword id="KW-0614">Plasmid</keyword>
<keyword id="KW-0732">Signal</keyword>
<sequence length="275" mass="31686">MAIRIFAILFSIFSLATFAHAQEGTLERSDWRKFFSEFQAKGTIVVADERQADRAMLVFDPVRSKKRYSPASTFKIPHTLFALDAGAVRDEFQIFRWDGVNRGFAGHNQDQDLRSAMRNSTVWVYELFAKEIGDDKARRYLKKIDYGNADPSTSNGDYWIEGSLAISAQEQIAFLRKLYRNELPFRVEHQRLVKDLMIVEAGRNWILRAKTGWEGRMGWWVGWVEWPTGSVFFALNIDTPNRMDDLFKREAIVRAILRSIEALPPNPAVNSDAAR</sequence>
<gene>
    <name type="primary">bla</name>
    <name type="synonym">oxa2</name>
</gene>
<comment type="function">
    <text>This is an oxacillin-hydrolyzing beta-lactamase.</text>
</comment>
<comment type="catalytic activity">
    <reaction evidence="2">
        <text>a beta-lactam + H2O = a substituted beta-amino acid</text>
        <dbReference type="Rhea" id="RHEA:20401"/>
        <dbReference type="ChEBI" id="CHEBI:15377"/>
        <dbReference type="ChEBI" id="CHEBI:35627"/>
        <dbReference type="ChEBI" id="CHEBI:140347"/>
        <dbReference type="EC" id="3.5.2.6"/>
    </reaction>
</comment>
<comment type="similarity">
    <text evidence="3">Belongs to the class-D beta-lactamase family.</text>
</comment>
<geneLocation type="plasmid">
    <name>IncN R46</name>
</geneLocation>
<reference key="1">
    <citation type="journal article" date="1987" name="Nucleic Acids Res.">
        <title>The region of the IncN plasmid R46 coding for resistance to beta-lactam antibiotics, streptomycin/spectinomycin and sulphonamides is closely related to antibiotic resistance segments found in IncW plasmids and in Tn21-like transposons.</title>
        <authorList>
            <person name="Hall R.M."/>
            <person name="Vockler C."/>
        </authorList>
    </citation>
    <scope>NUCLEOTIDE SEQUENCE [GENOMIC DNA]</scope>
</reference>
<reference key="2">
    <citation type="journal article" date="1992" name="Plasmid">
        <title>The integron In1 in plasmid R46 includes two copies of the oxa2 gene cassette.</title>
        <authorList>
            <person name="Stokes H.W."/>
            <person name="Hall R.M."/>
        </authorList>
    </citation>
    <scope>NUCLEOTIDE SEQUENCE [GENOMIC DNA]</scope>
</reference>
<feature type="signal peptide" evidence="1">
    <location>
        <begin position="1"/>
        <end position="21"/>
    </location>
</feature>
<feature type="chain" id="PRO_0000017025" description="Beta-lactamase OXA-2">
    <location>
        <begin position="22"/>
        <end position="275"/>
    </location>
</feature>
<feature type="active site" description="Acyl-ester intermediate" evidence="2">
    <location>
        <position position="72"/>
    </location>
</feature>
<feature type="binding site" evidence="1">
    <location>
        <begin position="210"/>
        <end position="212"/>
    </location>
    <ligand>
        <name>substrate</name>
    </ligand>
</feature>
<feature type="modified residue" description="N6-carboxylysine" evidence="1">
    <location>
        <position position="75"/>
    </location>
</feature>
<dbReference type="EC" id="3.5.2.6"/>
<dbReference type="EMBL" id="M95287">
    <property type="protein sequence ID" value="AAB59082.1"/>
    <property type="molecule type" value="Genomic_DNA"/>
</dbReference>
<dbReference type="EMBL" id="M95287">
    <property type="protein sequence ID" value="AAB59084.2"/>
    <property type="molecule type" value="Genomic_DNA"/>
</dbReference>
<dbReference type="RefSeq" id="YP_006953608.1">
    <property type="nucleotide sequence ID" value="NC_019081.1"/>
</dbReference>
<dbReference type="SMR" id="P0A1V9"/>
<dbReference type="BindingDB" id="P0A1V9"/>
<dbReference type="ChEMBL" id="CHEMBL1744485"/>
<dbReference type="GO" id="GO:0008800">
    <property type="term" value="F:beta-lactamase activity"/>
    <property type="evidence" value="ECO:0007669"/>
    <property type="project" value="UniProtKB-EC"/>
</dbReference>
<dbReference type="GO" id="GO:0008658">
    <property type="term" value="F:penicillin binding"/>
    <property type="evidence" value="ECO:0007669"/>
    <property type="project" value="InterPro"/>
</dbReference>
<dbReference type="GO" id="GO:0017001">
    <property type="term" value="P:antibiotic catabolic process"/>
    <property type="evidence" value="ECO:0007669"/>
    <property type="project" value="InterPro"/>
</dbReference>
<dbReference type="GO" id="GO:0046677">
    <property type="term" value="P:response to antibiotic"/>
    <property type="evidence" value="ECO:0007669"/>
    <property type="project" value="UniProtKB-KW"/>
</dbReference>
<dbReference type="Gene3D" id="3.40.710.10">
    <property type="entry name" value="DD-peptidase/beta-lactamase superfamily"/>
    <property type="match status" value="1"/>
</dbReference>
<dbReference type="InterPro" id="IPR012338">
    <property type="entry name" value="Beta-lactam/transpept-like"/>
</dbReference>
<dbReference type="InterPro" id="IPR002137">
    <property type="entry name" value="Beta-lactam_class-D_AS"/>
</dbReference>
<dbReference type="InterPro" id="IPR001460">
    <property type="entry name" value="PCN-bd_Tpept"/>
</dbReference>
<dbReference type="NCBIfam" id="NF012161">
    <property type="entry name" value="bla_class_D_main"/>
    <property type="match status" value="1"/>
</dbReference>
<dbReference type="NCBIfam" id="NF000267">
    <property type="entry name" value="blaOXA-2_like"/>
    <property type="match status" value="1"/>
</dbReference>
<dbReference type="Pfam" id="PF00905">
    <property type="entry name" value="Transpeptidase"/>
    <property type="match status" value="1"/>
</dbReference>
<dbReference type="SUPFAM" id="SSF56601">
    <property type="entry name" value="beta-lactamase/transpeptidase-like"/>
    <property type="match status" value="1"/>
</dbReference>
<dbReference type="PROSITE" id="PS00337">
    <property type="entry name" value="BETA_LACTAMASE_D"/>
    <property type="match status" value="1"/>
</dbReference>
<protein>
    <recommendedName>
        <fullName>Beta-lactamase OXA-2</fullName>
        <ecNumber>3.5.2.6</ecNumber>
    </recommendedName>
    <alternativeName>
        <fullName>Penicillinase</fullName>
    </alternativeName>
</protein>
<evidence type="ECO:0000250" key="1"/>
<evidence type="ECO:0000255" key="2">
    <source>
        <dbReference type="PROSITE-ProRule" id="PRU10103"/>
    </source>
</evidence>
<evidence type="ECO:0000305" key="3"/>
<proteinExistence type="inferred from homology"/>
<accession>P0A1V9</accession>
<accession>P05191</accession>
<accession>Q57015</accession>
<name>BLO2_ECOLX</name>
<organism>
    <name type="scientific">Escherichia coli</name>
    <dbReference type="NCBI Taxonomy" id="562"/>
    <lineage>
        <taxon>Bacteria</taxon>
        <taxon>Pseudomonadati</taxon>
        <taxon>Pseudomonadota</taxon>
        <taxon>Gammaproteobacteria</taxon>
        <taxon>Enterobacterales</taxon>
        <taxon>Enterobacteriaceae</taxon>
        <taxon>Escherichia</taxon>
    </lineage>
</organism>